<reference key="1">
    <citation type="journal article" date="2000" name="Nature">
        <title>Genome sequence of the endocellular bacterial symbiont of aphids Buchnera sp. APS.</title>
        <authorList>
            <person name="Shigenobu S."/>
            <person name="Watanabe H."/>
            <person name="Hattori M."/>
            <person name="Sakaki Y."/>
            <person name="Ishikawa H."/>
        </authorList>
    </citation>
    <scope>NUCLEOTIDE SEQUENCE [LARGE SCALE GENOMIC DNA]</scope>
    <source>
        <strain>APS</strain>
    </source>
</reference>
<dbReference type="EMBL" id="BA000003">
    <property type="protein sequence ID" value="BAB13105.1"/>
    <property type="molecule type" value="Genomic_DNA"/>
</dbReference>
<dbReference type="RefSeq" id="NP_240219.1">
    <property type="nucleotide sequence ID" value="NC_002528.1"/>
</dbReference>
<dbReference type="RefSeq" id="WP_009874360.1">
    <property type="nucleotide sequence ID" value="NZ_AP036055.1"/>
</dbReference>
<dbReference type="SMR" id="P57482"/>
<dbReference type="STRING" id="563178.BUAP5A_395"/>
<dbReference type="EnsemblBacteria" id="BAB13105">
    <property type="protein sequence ID" value="BAB13105"/>
    <property type="gene ID" value="BAB13105"/>
</dbReference>
<dbReference type="KEGG" id="buc:BU402"/>
<dbReference type="PATRIC" id="fig|107806.10.peg.416"/>
<dbReference type="eggNOG" id="COG4105">
    <property type="taxonomic scope" value="Bacteria"/>
</dbReference>
<dbReference type="HOGENOM" id="CLU_065982_0_2_6"/>
<dbReference type="Proteomes" id="UP000001806">
    <property type="component" value="Chromosome"/>
</dbReference>
<dbReference type="GO" id="GO:0009279">
    <property type="term" value="C:cell outer membrane"/>
    <property type="evidence" value="ECO:0007669"/>
    <property type="project" value="UniProtKB-SubCell"/>
</dbReference>
<dbReference type="GO" id="GO:0043165">
    <property type="term" value="P:Gram-negative-bacterium-type cell outer membrane assembly"/>
    <property type="evidence" value="ECO:0007669"/>
    <property type="project" value="UniProtKB-UniRule"/>
</dbReference>
<dbReference type="GO" id="GO:0051205">
    <property type="term" value="P:protein insertion into membrane"/>
    <property type="evidence" value="ECO:0007669"/>
    <property type="project" value="UniProtKB-UniRule"/>
</dbReference>
<dbReference type="CDD" id="cd15830">
    <property type="entry name" value="BamD"/>
    <property type="match status" value="1"/>
</dbReference>
<dbReference type="Gene3D" id="1.25.40.10">
    <property type="entry name" value="Tetratricopeptide repeat domain"/>
    <property type="match status" value="1"/>
</dbReference>
<dbReference type="HAMAP" id="MF_00922">
    <property type="entry name" value="OM_assembly_BamD"/>
    <property type="match status" value="1"/>
</dbReference>
<dbReference type="InterPro" id="IPR017689">
    <property type="entry name" value="BamD"/>
</dbReference>
<dbReference type="InterPro" id="IPR039565">
    <property type="entry name" value="BamD-like"/>
</dbReference>
<dbReference type="InterPro" id="IPR011990">
    <property type="entry name" value="TPR-like_helical_dom_sf"/>
</dbReference>
<dbReference type="NCBIfam" id="TIGR03302">
    <property type="entry name" value="OM_YfiO"/>
    <property type="match status" value="1"/>
</dbReference>
<dbReference type="Pfam" id="PF13525">
    <property type="entry name" value="YfiO"/>
    <property type="match status" value="1"/>
</dbReference>
<comment type="function">
    <text evidence="1">Part of the outer membrane protein assembly complex, which is involved in assembly and insertion of beta-barrel proteins into the outer membrane.</text>
</comment>
<comment type="subunit">
    <text evidence="1">Part of the Bam complex.</text>
</comment>
<comment type="subcellular location">
    <subcellularLocation>
        <location evidence="1">Cell outer membrane</location>
    </subcellularLocation>
</comment>
<comment type="similarity">
    <text evidence="1">Belongs to the BamD family.</text>
</comment>
<feature type="signal peptide" evidence="1">
    <location>
        <begin position="1"/>
        <end position="22"/>
    </location>
</feature>
<feature type="chain" id="PRO_0000190090" description="Outer membrane protein assembly factor BamD">
    <location>
        <begin position="23"/>
        <end position="246"/>
    </location>
</feature>
<protein>
    <recommendedName>
        <fullName evidence="1">Outer membrane protein assembly factor BamD</fullName>
    </recommendedName>
</protein>
<proteinExistence type="inferred from homology"/>
<organism>
    <name type="scientific">Buchnera aphidicola subsp. Acyrthosiphon pisum (strain APS)</name>
    <name type="common">Acyrthosiphon pisum symbiotic bacterium</name>
    <dbReference type="NCBI Taxonomy" id="107806"/>
    <lineage>
        <taxon>Bacteria</taxon>
        <taxon>Pseudomonadati</taxon>
        <taxon>Pseudomonadota</taxon>
        <taxon>Gammaproteobacteria</taxon>
        <taxon>Enterobacterales</taxon>
        <taxon>Erwiniaceae</taxon>
        <taxon>Buchnera</taxon>
    </lineage>
</organism>
<sequence>MKKKNSIIFVFMILFFNSTVQSQSFKKNYFTERYTLYEKSNKELRKENFDNAISILEKIKKNNNTANISNDKIQIDLIYAYYKILNFDQARKNIEEFMYFYPNHPNIDYVVYIQCLISMSLDKNRFFSVFPINYYKNDYFYAKNAFFQLKYFIYQYPKSRYVVNAKKNLIYIKNRLSEHDLSILKFYFFHKEYIAVINRGEEMLQRYSETPSARKALIYIEKSYYALKIFDTAKKISKIILLNKIQ</sequence>
<gene>
    <name evidence="1" type="primary">bamD</name>
    <name type="ordered locus">BU402</name>
</gene>
<accession>P57482</accession>
<name>BAMD_BUCAI</name>
<evidence type="ECO:0000255" key="1">
    <source>
        <dbReference type="HAMAP-Rule" id="MF_00922"/>
    </source>
</evidence>
<keyword id="KW-0998">Cell outer membrane</keyword>
<keyword id="KW-0472">Membrane</keyword>
<keyword id="KW-1185">Reference proteome</keyword>
<keyword id="KW-0732">Signal</keyword>